<keyword id="KW-0175">Coiled coil</keyword>
<keyword id="KW-0963">Cytoplasm</keyword>
<keyword id="KW-0221">Differentiation</keyword>
<keyword id="KW-0507">mRNA processing</keyword>
<keyword id="KW-0508">mRNA splicing</keyword>
<keyword id="KW-0509">mRNA transport</keyword>
<keyword id="KW-0539">Nucleus</keyword>
<keyword id="KW-1185">Reference proteome</keyword>
<keyword id="KW-0694">RNA-binding</keyword>
<keyword id="KW-0813">Transport</keyword>
<gene>
    <name type="primary">THOC5</name>
    <name type="ORF">RCJMB04_17i18</name>
</gene>
<feature type="chain" id="PRO_0000310557" description="THO complex subunit 5 homolog">
    <location>
        <begin position="1"/>
        <end position="698"/>
    </location>
</feature>
<feature type="region of interest" description="Disordered" evidence="4">
    <location>
        <begin position="1"/>
        <end position="32"/>
    </location>
</feature>
<feature type="region of interest" description="Tandem RWD domains" evidence="2">
    <location>
        <begin position="246"/>
        <end position="698"/>
    </location>
</feature>
<feature type="region of interest" description="Disordered" evidence="4">
    <location>
        <begin position="298"/>
        <end position="327"/>
    </location>
</feature>
<feature type="coiled-coil region" evidence="2">
    <location>
        <begin position="80"/>
        <end position="246"/>
    </location>
</feature>
<feature type="short sequence motif" description="Nuclear localization signal" evidence="1">
    <location>
        <begin position="6"/>
        <end position="9"/>
    </location>
</feature>
<feature type="compositionally biased region" description="Basic residues" evidence="4">
    <location>
        <begin position="1"/>
        <end position="12"/>
    </location>
</feature>
<feature type="compositionally biased region" description="Basic and acidic residues" evidence="4">
    <location>
        <begin position="21"/>
        <end position="32"/>
    </location>
</feature>
<feature type="compositionally biased region" description="Acidic residues" evidence="4">
    <location>
        <begin position="305"/>
        <end position="318"/>
    </location>
</feature>
<organism>
    <name type="scientific">Gallus gallus</name>
    <name type="common">Chicken</name>
    <dbReference type="NCBI Taxonomy" id="9031"/>
    <lineage>
        <taxon>Eukaryota</taxon>
        <taxon>Metazoa</taxon>
        <taxon>Chordata</taxon>
        <taxon>Craniata</taxon>
        <taxon>Vertebrata</taxon>
        <taxon>Euteleostomi</taxon>
        <taxon>Archelosauria</taxon>
        <taxon>Archosauria</taxon>
        <taxon>Dinosauria</taxon>
        <taxon>Saurischia</taxon>
        <taxon>Theropoda</taxon>
        <taxon>Coelurosauria</taxon>
        <taxon>Aves</taxon>
        <taxon>Neognathae</taxon>
        <taxon>Galloanserae</taxon>
        <taxon>Galliformes</taxon>
        <taxon>Phasianidae</taxon>
        <taxon>Phasianinae</taxon>
        <taxon>Gallus</taxon>
    </lineage>
</organism>
<comment type="function">
    <text evidence="2">Component of the THO subcomplex of the TREX complex which is thought to couple mRNA transcription, processing and nuclear export, and which specifically associates with spliced mRNA and not with unspliced pre-mRNA. Plays a key structural role in the oligomerization of the THO-DDX39B complex. TREX is recruited to spliced mRNAs by a transcription-independent mechanism, binds to mRNA upstream of the exon-junction complex (EJC) and is recruited in a splicing- and cap-dependent manner to a region near the 5' end of the mRNA where it functions in mRNA export to the cytoplasm via the TAP/NXF1 pathway. THOC5 in conjunction with ALYREF/THOC4 functions in NXF1-NXT1 mediated nuclear export of HSP70 mRNA; both proteins enhance the RNA binding activity of NXF1 and are required for NXF1 localization to the nuclear rim. Involved in transcription elongation and genome stability. Involved in alternative polyadenylation site choice by recruiting CPSF6 to 5' region of target genes; probably mediates association of the TREX and CFIm complexes.</text>
</comment>
<comment type="function">
    <text evidence="3">Regulates the expression of myeloid transcription factors CEBPA, CEBPB and GAB2 by enhancing the levels of phosphatidylinositol 3,4,5-trisphosphate. May be involved in the differentiation of granulocytes and adipocytes. Essential for hematopoietic primitive cell survival and plays an integral role in monocytic development (By similarity).</text>
</comment>
<comment type="subunit">
    <text evidence="2">Component of the THO subcomplex, which is composed of thoc1, thoc2, thoc3, thoc5, thoc6 and thoc7 (By similarity). Component of the transcription/export (TREX) complex at least composed of alyref/thoc4, ddx39b, sarnp/cip29, chtop and the THO subcomplex (By similarity).</text>
</comment>
<comment type="subcellular location">
    <subcellularLocation>
        <location evidence="2">Nucleus</location>
    </subcellularLocation>
    <subcellularLocation>
        <location evidence="2">Cytoplasm</location>
    </subcellularLocation>
    <text evidence="2">Shuttles between nucleus and cytoplasm.</text>
</comment>
<comment type="similarity">
    <text evidence="5">Belongs to the THOC5 family.</text>
</comment>
<reference key="1">
    <citation type="journal article" date="2005" name="Genome Biol.">
        <title>Full-length cDNAs from chicken bursal lymphocytes to facilitate gene function analysis.</title>
        <authorList>
            <person name="Caldwell R.B."/>
            <person name="Kierzek A.M."/>
            <person name="Arakawa H."/>
            <person name="Bezzubov Y."/>
            <person name="Zaim J."/>
            <person name="Fiedler P."/>
            <person name="Kutter S."/>
            <person name="Blagodatski A."/>
            <person name="Kostovska D."/>
            <person name="Koter M."/>
            <person name="Plachy J."/>
            <person name="Carninci P."/>
            <person name="Hayashizaki Y."/>
            <person name="Buerstedde J.-M."/>
        </authorList>
    </citation>
    <scope>NUCLEOTIDE SEQUENCE [LARGE SCALE MRNA]</scope>
    <source>
        <strain>CB</strain>
        <tissue>Bursa of Fabricius</tissue>
    </source>
</reference>
<dbReference type="EMBL" id="AJ720433">
    <property type="protein sequence ID" value="CAG32092.1"/>
    <property type="molecule type" value="mRNA"/>
</dbReference>
<dbReference type="RefSeq" id="NP_001006195.1">
    <property type="nucleotide sequence ID" value="NM_001006195.1"/>
</dbReference>
<dbReference type="SMR" id="Q5ZJK1"/>
<dbReference type="FunCoup" id="Q5ZJK1">
    <property type="interactions" value="1702"/>
</dbReference>
<dbReference type="STRING" id="9031.ENSGALP00000064631"/>
<dbReference type="PaxDb" id="9031-ENSGALP00000037250"/>
<dbReference type="GeneID" id="417019"/>
<dbReference type="KEGG" id="gga:417019"/>
<dbReference type="CTD" id="8563"/>
<dbReference type="VEuPathDB" id="HostDB:geneid_417019"/>
<dbReference type="eggNOG" id="KOG2216">
    <property type="taxonomic scope" value="Eukaryota"/>
</dbReference>
<dbReference type="HOGENOM" id="CLU_023759_1_0_1"/>
<dbReference type="InParanoid" id="Q5ZJK1"/>
<dbReference type="OrthoDB" id="20582at2759"/>
<dbReference type="PhylomeDB" id="Q5ZJK1"/>
<dbReference type="PRO" id="PR:Q5ZJK1"/>
<dbReference type="Proteomes" id="UP000000539">
    <property type="component" value="Unassembled WGS sequence"/>
</dbReference>
<dbReference type="GO" id="GO:0005737">
    <property type="term" value="C:cytoplasm"/>
    <property type="evidence" value="ECO:0007669"/>
    <property type="project" value="UniProtKB-SubCell"/>
</dbReference>
<dbReference type="GO" id="GO:0000445">
    <property type="term" value="C:THO complex part of transcription export complex"/>
    <property type="evidence" value="ECO:0000318"/>
    <property type="project" value="GO_Central"/>
</dbReference>
<dbReference type="GO" id="GO:0003729">
    <property type="term" value="F:mRNA binding"/>
    <property type="evidence" value="ECO:0000318"/>
    <property type="project" value="GO_Central"/>
</dbReference>
<dbReference type="GO" id="GO:0030154">
    <property type="term" value="P:cell differentiation"/>
    <property type="evidence" value="ECO:0007669"/>
    <property type="project" value="UniProtKB-KW"/>
</dbReference>
<dbReference type="GO" id="GO:0006406">
    <property type="term" value="P:mRNA export from nucleus"/>
    <property type="evidence" value="ECO:0000250"/>
    <property type="project" value="UniProtKB"/>
</dbReference>
<dbReference type="GO" id="GO:0006397">
    <property type="term" value="P:mRNA processing"/>
    <property type="evidence" value="ECO:0007669"/>
    <property type="project" value="UniProtKB-KW"/>
</dbReference>
<dbReference type="GO" id="GO:0008380">
    <property type="term" value="P:RNA splicing"/>
    <property type="evidence" value="ECO:0007669"/>
    <property type="project" value="UniProtKB-KW"/>
</dbReference>
<dbReference type="InterPro" id="IPR019163">
    <property type="entry name" value="THO_Thoc5"/>
</dbReference>
<dbReference type="PANTHER" id="PTHR13375">
    <property type="entry name" value="FMS INTERACTING PROTEIN"/>
    <property type="match status" value="1"/>
</dbReference>
<dbReference type="PANTHER" id="PTHR13375:SF3">
    <property type="entry name" value="THO COMPLEX SUBUNIT 5 HOMOLOG"/>
    <property type="match status" value="1"/>
</dbReference>
<dbReference type="Pfam" id="PF09766">
    <property type="entry name" value="FmiP_Thoc5"/>
    <property type="match status" value="2"/>
</dbReference>
<name>THOC5_CHICK</name>
<sequence>MSSDSKKRKPKVIRTDGGPQEGKRGKADGEQDARYYSEECEVDLRDPIKDYELYKETCQELQRLMAEIQELKSRGVKDNASEIDERRVQSCVHFMTLKKLNRLAHIRLKKGRDQTHEAKQKVDAYHLQLQNLLYEVMHLQKEITKCLEFKSKHEEIELVSLEEFYSEAPTEISRPDITLTEPHQQTLARLDWELEQRKRLAERYKECQTIKEKILKEIEVKKEYLSSLQPRLNSIMQASLPVQEYLFMPFDQAHKQYETARHLPPPLYVLFVQASAYGQACDKKLVVAIEGSVEEAKALYKPPEDSQDDESDSDMEEEQTTKRRRPTLGVQLDDKRKEMLKRHPLSVTVDLKCKDENVLHLTFYYLMNLNIMTVLHLTFYYLMNLNIMTVKTKVTTAAELTTAISAGDLLSPDSLLSCLYPGDHGKKTPNPANQFQFDKVGILTLSDYVTELGHPYVWVQKLGGLHFPKDQPQHTVTADNSLSASHMEMTMKLLRTRLQSRLALHKQFASLEHGVVPVSSECQHLFPTKIVSRLVKWTAIPFEDYTELPYTKDVVEAGLAEDTHLYYMALIERGTAKLQAAVVLNPGYSALPPIFSLCLNWKGERTGSNDDNIRAMESEVNVCYKELWGPKPGYQLLTNQLQRLCMVLDVYLETEPHDTTVEGPKEFPQEKMCLRLVRGPMRLKPFKFNYPQGFFSHR</sequence>
<evidence type="ECO:0000250" key="1"/>
<evidence type="ECO:0000250" key="2">
    <source>
        <dbReference type="UniProtKB" id="Q13769"/>
    </source>
</evidence>
<evidence type="ECO:0000250" key="3">
    <source>
        <dbReference type="UniProtKB" id="Q8BKT7"/>
    </source>
</evidence>
<evidence type="ECO:0000256" key="4">
    <source>
        <dbReference type="SAM" id="MobiDB-lite"/>
    </source>
</evidence>
<evidence type="ECO:0000305" key="5"/>
<proteinExistence type="evidence at transcript level"/>
<protein>
    <recommendedName>
        <fullName>THO complex subunit 5 homolog</fullName>
    </recommendedName>
</protein>
<accession>Q5ZJK1</accession>